<gene>
    <name evidence="1" type="primary">selU</name>
    <name type="ordered locus">Maqu_3619</name>
</gene>
<keyword id="KW-0711">Selenium</keyword>
<keyword id="KW-0808">Transferase</keyword>
<protein>
    <recommendedName>
        <fullName evidence="1">tRNA 2-selenouridine synthase</fullName>
        <ecNumber evidence="1">2.9.1.3</ecNumber>
    </recommendedName>
</protein>
<evidence type="ECO:0000255" key="1">
    <source>
        <dbReference type="HAMAP-Rule" id="MF_01622"/>
    </source>
</evidence>
<organism>
    <name type="scientific">Marinobacter nauticus (strain ATCC 700491 / DSM 11845 / VT8)</name>
    <name type="common">Marinobacter aquaeolei</name>
    <dbReference type="NCBI Taxonomy" id="351348"/>
    <lineage>
        <taxon>Bacteria</taxon>
        <taxon>Pseudomonadati</taxon>
        <taxon>Pseudomonadota</taxon>
        <taxon>Gammaproteobacteria</taxon>
        <taxon>Pseudomonadales</taxon>
        <taxon>Marinobacteraceae</taxon>
        <taxon>Marinobacter</taxon>
    </lineage>
</organism>
<comment type="function">
    <text evidence="1">Involved in the post-transcriptional modification of the uridine at the wobble position (U34) of tRNA(Lys), tRNA(Glu) and tRNA(Gln). Catalyzes the conversion of 2-thiouridine (S2U-RNA) to 2-selenouridine (Se2U-RNA). Acts in a two-step process involving geranylation of 2-thiouridine (S2U) to S-geranyl-2-thiouridine (geS2U) and subsequent selenation of the latter derivative to 2-selenouridine (Se2U) in the tRNA chain.</text>
</comment>
<comment type="catalytic activity">
    <reaction evidence="1">
        <text>5-methylaminomethyl-2-thiouridine(34) in tRNA + selenophosphate + (2E)-geranyl diphosphate + H2O + H(+) = 5-methylaminomethyl-2-selenouridine(34) in tRNA + (2E)-thiogeraniol + phosphate + diphosphate</text>
        <dbReference type="Rhea" id="RHEA:42716"/>
        <dbReference type="Rhea" id="RHEA-COMP:10195"/>
        <dbReference type="Rhea" id="RHEA-COMP:10196"/>
        <dbReference type="ChEBI" id="CHEBI:15377"/>
        <dbReference type="ChEBI" id="CHEBI:15378"/>
        <dbReference type="ChEBI" id="CHEBI:16144"/>
        <dbReference type="ChEBI" id="CHEBI:33019"/>
        <dbReference type="ChEBI" id="CHEBI:43474"/>
        <dbReference type="ChEBI" id="CHEBI:58057"/>
        <dbReference type="ChEBI" id="CHEBI:74455"/>
        <dbReference type="ChEBI" id="CHEBI:82743"/>
        <dbReference type="ChEBI" id="CHEBI:143703"/>
        <dbReference type="EC" id="2.9.1.3"/>
    </reaction>
    <physiologicalReaction direction="left-to-right" evidence="1">
        <dbReference type="Rhea" id="RHEA:42717"/>
    </physiologicalReaction>
</comment>
<comment type="catalytic activity">
    <reaction evidence="1">
        <text>5-methylaminomethyl-2-thiouridine(34) in tRNA + (2E)-geranyl diphosphate = 5-methylaminomethyl-S-(2E)-geranyl-thiouridine(34) in tRNA + diphosphate</text>
        <dbReference type="Rhea" id="RHEA:14085"/>
        <dbReference type="Rhea" id="RHEA-COMP:10195"/>
        <dbReference type="Rhea" id="RHEA-COMP:14654"/>
        <dbReference type="ChEBI" id="CHEBI:33019"/>
        <dbReference type="ChEBI" id="CHEBI:58057"/>
        <dbReference type="ChEBI" id="CHEBI:74455"/>
        <dbReference type="ChEBI" id="CHEBI:140632"/>
    </reaction>
    <physiologicalReaction direction="left-to-right" evidence="1">
        <dbReference type="Rhea" id="RHEA:14086"/>
    </physiologicalReaction>
</comment>
<comment type="catalytic activity">
    <reaction evidence="1">
        <text>5-methylaminomethyl-S-(2E)-geranyl-thiouridine(34) in tRNA + selenophosphate + H(+) = 5-methylaminomethyl-2-(Se-phospho)selenouridine(34) in tRNA + (2E)-thiogeraniol</text>
        <dbReference type="Rhea" id="RHEA:60172"/>
        <dbReference type="Rhea" id="RHEA-COMP:14654"/>
        <dbReference type="Rhea" id="RHEA-COMP:15523"/>
        <dbReference type="ChEBI" id="CHEBI:15378"/>
        <dbReference type="ChEBI" id="CHEBI:16144"/>
        <dbReference type="ChEBI" id="CHEBI:140632"/>
        <dbReference type="ChEBI" id="CHEBI:143702"/>
        <dbReference type="ChEBI" id="CHEBI:143703"/>
    </reaction>
    <physiologicalReaction direction="left-to-right" evidence="1">
        <dbReference type="Rhea" id="RHEA:60173"/>
    </physiologicalReaction>
</comment>
<comment type="catalytic activity">
    <reaction evidence="1">
        <text>5-methylaminomethyl-2-(Se-phospho)selenouridine(34) in tRNA + H2O = 5-methylaminomethyl-2-selenouridine(34) in tRNA + phosphate</text>
        <dbReference type="Rhea" id="RHEA:60176"/>
        <dbReference type="Rhea" id="RHEA-COMP:10196"/>
        <dbReference type="Rhea" id="RHEA-COMP:15523"/>
        <dbReference type="ChEBI" id="CHEBI:15377"/>
        <dbReference type="ChEBI" id="CHEBI:43474"/>
        <dbReference type="ChEBI" id="CHEBI:82743"/>
        <dbReference type="ChEBI" id="CHEBI:143702"/>
    </reaction>
    <physiologicalReaction direction="left-to-right" evidence="1">
        <dbReference type="Rhea" id="RHEA:60177"/>
    </physiologicalReaction>
</comment>
<comment type="subunit">
    <text evidence="1">Monomer.</text>
</comment>
<comment type="similarity">
    <text evidence="1">Belongs to the SelU family.</text>
</comment>
<name>SELU_MARN8</name>
<accession>A1U6R9</accession>
<feature type="chain" id="PRO_0000292701" description="tRNA 2-selenouridine synthase">
    <location>
        <begin position="1"/>
        <end position="367"/>
    </location>
</feature>
<feature type="domain" description="Rhodanese" evidence="1">
    <location>
        <begin position="14"/>
        <end position="137"/>
    </location>
</feature>
<feature type="active site" description="S-selanylcysteine intermediate" evidence="1">
    <location>
        <position position="97"/>
    </location>
</feature>
<dbReference type="EC" id="2.9.1.3" evidence="1"/>
<dbReference type="EMBL" id="CP000514">
    <property type="protein sequence ID" value="ABM20688.1"/>
    <property type="molecule type" value="Genomic_DNA"/>
</dbReference>
<dbReference type="RefSeq" id="WP_011787026.1">
    <property type="nucleotide sequence ID" value="NC_008740.1"/>
</dbReference>
<dbReference type="SMR" id="A1U6R9"/>
<dbReference type="STRING" id="351348.Maqu_3619"/>
<dbReference type="KEGG" id="maq:Maqu_3619"/>
<dbReference type="eggNOG" id="COG2603">
    <property type="taxonomic scope" value="Bacteria"/>
</dbReference>
<dbReference type="HOGENOM" id="CLU_043456_1_0_6"/>
<dbReference type="OrthoDB" id="9808735at2"/>
<dbReference type="Proteomes" id="UP000000998">
    <property type="component" value="Chromosome"/>
</dbReference>
<dbReference type="GO" id="GO:0016765">
    <property type="term" value="F:transferase activity, transferring alkyl or aryl (other than methyl) groups"/>
    <property type="evidence" value="ECO:0007669"/>
    <property type="project" value="UniProtKB-UniRule"/>
</dbReference>
<dbReference type="GO" id="GO:0043828">
    <property type="term" value="F:tRNA 2-selenouridine synthase activity"/>
    <property type="evidence" value="ECO:0007669"/>
    <property type="project" value="UniProtKB-EC"/>
</dbReference>
<dbReference type="GO" id="GO:0002098">
    <property type="term" value="P:tRNA wobble uridine modification"/>
    <property type="evidence" value="ECO:0007669"/>
    <property type="project" value="UniProtKB-UniRule"/>
</dbReference>
<dbReference type="CDD" id="cd01520">
    <property type="entry name" value="RHOD_YbbB"/>
    <property type="match status" value="1"/>
</dbReference>
<dbReference type="Gene3D" id="3.40.250.10">
    <property type="entry name" value="Rhodanese-like domain"/>
    <property type="match status" value="1"/>
</dbReference>
<dbReference type="HAMAP" id="MF_01622">
    <property type="entry name" value="tRNA_sel_U_synth"/>
    <property type="match status" value="1"/>
</dbReference>
<dbReference type="InterPro" id="IPR001763">
    <property type="entry name" value="Rhodanese-like_dom"/>
</dbReference>
<dbReference type="InterPro" id="IPR036873">
    <property type="entry name" value="Rhodanese-like_dom_sf"/>
</dbReference>
<dbReference type="InterPro" id="IPR017582">
    <property type="entry name" value="SelU"/>
</dbReference>
<dbReference type="NCBIfam" id="NF008750">
    <property type="entry name" value="PRK11784.1-2"/>
    <property type="match status" value="1"/>
</dbReference>
<dbReference type="NCBIfam" id="NF008751">
    <property type="entry name" value="PRK11784.1-3"/>
    <property type="match status" value="1"/>
</dbReference>
<dbReference type="NCBIfam" id="TIGR03167">
    <property type="entry name" value="tRNA_sel_U_synt"/>
    <property type="match status" value="1"/>
</dbReference>
<dbReference type="PANTHER" id="PTHR30401">
    <property type="entry name" value="TRNA 2-SELENOURIDINE SYNTHASE"/>
    <property type="match status" value="1"/>
</dbReference>
<dbReference type="PANTHER" id="PTHR30401:SF0">
    <property type="entry name" value="TRNA 2-SELENOURIDINE SYNTHASE"/>
    <property type="match status" value="1"/>
</dbReference>
<dbReference type="SMART" id="SM00450">
    <property type="entry name" value="RHOD"/>
    <property type="match status" value="1"/>
</dbReference>
<dbReference type="SUPFAM" id="SSF52821">
    <property type="entry name" value="Rhodanese/Cell cycle control phosphatase"/>
    <property type="match status" value="1"/>
</dbReference>
<dbReference type="PROSITE" id="PS50206">
    <property type="entry name" value="RHODANESE_3"/>
    <property type="match status" value="1"/>
</dbReference>
<reference key="1">
    <citation type="journal article" date="2011" name="Appl. Environ. Microbiol.">
        <title>Genomic potential of Marinobacter aquaeolei, a biogeochemical 'opportunitroph'.</title>
        <authorList>
            <person name="Singer E."/>
            <person name="Webb E.A."/>
            <person name="Nelson W.C."/>
            <person name="Heidelberg J.F."/>
            <person name="Ivanova N."/>
            <person name="Pati A."/>
            <person name="Edwards K.J."/>
        </authorList>
    </citation>
    <scope>NUCLEOTIDE SEQUENCE [LARGE SCALE GENOMIC DNA]</scope>
    <source>
        <strain>ATCC 700491 / DSM 11845 / VT8</strain>
    </source>
</reference>
<proteinExistence type="inferred from homology"/>
<sequence>MASRPDTDDYLNLFLNDVPLMDVRAPVEFAKGSFPSAENAPLMNDEERHRVGICYKEKGQDKAIELGHQLVSGDIKAQRIEAWKRFVAQHPEGYLFCFRGGLRSRLTQQWIRDSGIDYPLVKGGYKALRRFLIDSLEAQIESGQFRILSGRTGTGKTRVLMQLPNPVDLEGLANHRGSSFGRQVTPQPSQIDFENRLGVAMLKARHQAGGPIYLEDESRLIGRCALPETLRARMSESPLLILEQAMEERIAIIRADYVEGMLASYRARDGEDAGWLNFRDYLLSAIDRIRKRLGGERYQKLRNLMLQALDQQEANGSLEGHHGWIEALLTDYYDPMYDYQLTQKQGEILVRGGPEVITEWARSRTST</sequence>